<feature type="chain" id="PRO_1000013858" description="Putative 4-hydroxy-4-methyl-2-oxoglutarate aldolase">
    <location>
        <begin position="1"/>
        <end position="163"/>
    </location>
</feature>
<feature type="binding site" evidence="1">
    <location>
        <begin position="76"/>
        <end position="79"/>
    </location>
    <ligand>
        <name>substrate</name>
    </ligand>
</feature>
<feature type="binding site" evidence="1">
    <location>
        <position position="98"/>
    </location>
    <ligand>
        <name>substrate</name>
    </ligand>
</feature>
<feature type="binding site" evidence="1">
    <location>
        <position position="99"/>
    </location>
    <ligand>
        <name>a divalent metal cation</name>
        <dbReference type="ChEBI" id="CHEBI:60240"/>
    </ligand>
</feature>
<reference key="1">
    <citation type="journal article" date="2006" name="Nat. Biotechnol.">
        <title>Complete genome sequence of the entomopathogenic and metabolically versatile soil bacterium Pseudomonas entomophila.</title>
        <authorList>
            <person name="Vodovar N."/>
            <person name="Vallenet D."/>
            <person name="Cruveiller S."/>
            <person name="Rouy Z."/>
            <person name="Barbe V."/>
            <person name="Acosta C."/>
            <person name="Cattolico L."/>
            <person name="Jubin C."/>
            <person name="Lajus A."/>
            <person name="Segurens B."/>
            <person name="Vacherie B."/>
            <person name="Wincker P."/>
            <person name="Weissenbach J."/>
            <person name="Lemaitre B."/>
            <person name="Medigue C."/>
            <person name="Boccard F."/>
        </authorList>
    </citation>
    <scope>NUCLEOTIDE SEQUENCE [LARGE SCALE GENOMIC DNA]</scope>
    <source>
        <strain>L48</strain>
    </source>
</reference>
<keyword id="KW-0456">Lyase</keyword>
<keyword id="KW-0479">Metal-binding</keyword>
<sequence length="163" mass="17549">MQHYVTPDLCDAYPDLVQVLEPMFSNFGGRDSFGGQIVTIKCFEDNSLVKEQVDLDGKGKVLVVDGGGSLRRALLGDMLAEKAAKNGWEGLVIYGCVRDVDVLVQTDVGVQALASHPMKTDKRGIGDLNVAVTFAGVTFRPGEYVYADNNGVIVSPSPLKMPE</sequence>
<organism>
    <name type="scientific">Pseudomonas entomophila (strain L48)</name>
    <dbReference type="NCBI Taxonomy" id="384676"/>
    <lineage>
        <taxon>Bacteria</taxon>
        <taxon>Pseudomonadati</taxon>
        <taxon>Pseudomonadota</taxon>
        <taxon>Gammaproteobacteria</taxon>
        <taxon>Pseudomonadales</taxon>
        <taxon>Pseudomonadaceae</taxon>
        <taxon>Pseudomonas</taxon>
    </lineage>
</organism>
<proteinExistence type="inferred from homology"/>
<accession>Q1ICM4</accession>
<dbReference type="EC" id="4.1.3.17"/>
<dbReference type="EC" id="4.1.1.112"/>
<dbReference type="EMBL" id="CT573326">
    <property type="protein sequence ID" value="CAK14589.1"/>
    <property type="molecule type" value="Genomic_DNA"/>
</dbReference>
<dbReference type="RefSeq" id="WP_011532999.1">
    <property type="nucleotide sequence ID" value="NC_008027.1"/>
</dbReference>
<dbReference type="SMR" id="Q1ICM4"/>
<dbReference type="STRING" id="384676.PSEEN1744"/>
<dbReference type="GeneID" id="32804982"/>
<dbReference type="KEGG" id="pen:PSEEN1744"/>
<dbReference type="eggNOG" id="COG0684">
    <property type="taxonomic scope" value="Bacteria"/>
</dbReference>
<dbReference type="HOGENOM" id="CLU_072626_4_0_6"/>
<dbReference type="OrthoDB" id="943692at2"/>
<dbReference type="Proteomes" id="UP000000658">
    <property type="component" value="Chromosome"/>
</dbReference>
<dbReference type="GO" id="GO:0047443">
    <property type="term" value="F:4-hydroxy-4-methyl-2-oxoglutarate aldolase activity"/>
    <property type="evidence" value="ECO:0007669"/>
    <property type="project" value="UniProtKB-EC"/>
</dbReference>
<dbReference type="GO" id="GO:0046872">
    <property type="term" value="F:metal ion binding"/>
    <property type="evidence" value="ECO:0007669"/>
    <property type="project" value="UniProtKB-KW"/>
</dbReference>
<dbReference type="GO" id="GO:0008948">
    <property type="term" value="F:oxaloacetate decarboxylase activity"/>
    <property type="evidence" value="ECO:0007669"/>
    <property type="project" value="UniProtKB-EC"/>
</dbReference>
<dbReference type="GO" id="GO:0008428">
    <property type="term" value="F:ribonuclease inhibitor activity"/>
    <property type="evidence" value="ECO:0007669"/>
    <property type="project" value="InterPro"/>
</dbReference>
<dbReference type="GO" id="GO:0051252">
    <property type="term" value="P:regulation of RNA metabolic process"/>
    <property type="evidence" value="ECO:0007669"/>
    <property type="project" value="InterPro"/>
</dbReference>
<dbReference type="CDD" id="cd16841">
    <property type="entry name" value="RraA_family"/>
    <property type="match status" value="1"/>
</dbReference>
<dbReference type="Gene3D" id="3.50.30.40">
    <property type="entry name" value="Ribonuclease E inhibitor RraA/RraA-like"/>
    <property type="match status" value="1"/>
</dbReference>
<dbReference type="InterPro" id="IPR010203">
    <property type="entry name" value="RraA"/>
</dbReference>
<dbReference type="InterPro" id="IPR005493">
    <property type="entry name" value="RraA/RraA-like"/>
</dbReference>
<dbReference type="InterPro" id="IPR036704">
    <property type="entry name" value="RraA/RraA-like_sf"/>
</dbReference>
<dbReference type="NCBIfam" id="TIGR01935">
    <property type="entry name" value="NOT-MenG"/>
    <property type="match status" value="1"/>
</dbReference>
<dbReference type="NCBIfam" id="NF006875">
    <property type="entry name" value="PRK09372.1"/>
    <property type="match status" value="1"/>
</dbReference>
<dbReference type="NCBIfam" id="NF009134">
    <property type="entry name" value="PRK12487.1"/>
    <property type="match status" value="1"/>
</dbReference>
<dbReference type="PANTHER" id="PTHR33254">
    <property type="entry name" value="4-HYDROXY-4-METHYL-2-OXOGLUTARATE ALDOLASE 3-RELATED"/>
    <property type="match status" value="1"/>
</dbReference>
<dbReference type="PANTHER" id="PTHR33254:SF29">
    <property type="entry name" value="REGULATOR OF RIBONUCLEASE ACTIVITY A"/>
    <property type="match status" value="1"/>
</dbReference>
<dbReference type="Pfam" id="PF03737">
    <property type="entry name" value="RraA-like"/>
    <property type="match status" value="1"/>
</dbReference>
<dbReference type="SUPFAM" id="SSF89562">
    <property type="entry name" value="RraA-like"/>
    <property type="match status" value="1"/>
</dbReference>
<name>RRAAH_PSEE4</name>
<protein>
    <recommendedName>
        <fullName>Putative 4-hydroxy-4-methyl-2-oxoglutarate aldolase</fullName>
        <shortName>HMG aldolase</shortName>
        <ecNumber>4.1.3.17</ecNumber>
    </recommendedName>
    <alternativeName>
        <fullName>Oxaloacetate decarboxylase</fullName>
        <shortName>OAA decarboxylase</shortName>
        <ecNumber>4.1.1.112</ecNumber>
    </alternativeName>
    <alternativeName>
        <fullName>Regulator of ribonuclease activity homolog</fullName>
    </alternativeName>
    <alternativeName>
        <fullName>RraA-like protein</fullName>
    </alternativeName>
</protein>
<evidence type="ECO:0000250" key="1"/>
<evidence type="ECO:0000305" key="2"/>
<gene>
    <name type="ordered locus">PSEEN1744</name>
</gene>
<comment type="function">
    <text evidence="1">Catalyzes the aldol cleavage of 4-hydroxy-4-methyl-2-oxoglutarate (HMG) into 2 molecules of pyruvate. Also contains a secondary oxaloacetate (OAA) decarboxylase activity due to the common pyruvate enolate transition state formed following C-C bond cleavage in the retro-aldol and decarboxylation reactions (By similarity).</text>
</comment>
<comment type="catalytic activity">
    <reaction>
        <text>4-hydroxy-4-methyl-2-oxoglutarate = 2 pyruvate</text>
        <dbReference type="Rhea" id="RHEA:22748"/>
        <dbReference type="ChEBI" id="CHEBI:15361"/>
        <dbReference type="ChEBI" id="CHEBI:58276"/>
        <dbReference type="EC" id="4.1.3.17"/>
    </reaction>
</comment>
<comment type="catalytic activity">
    <reaction>
        <text>oxaloacetate + H(+) = pyruvate + CO2</text>
        <dbReference type="Rhea" id="RHEA:15641"/>
        <dbReference type="ChEBI" id="CHEBI:15361"/>
        <dbReference type="ChEBI" id="CHEBI:15378"/>
        <dbReference type="ChEBI" id="CHEBI:16452"/>
        <dbReference type="ChEBI" id="CHEBI:16526"/>
        <dbReference type="EC" id="4.1.1.112"/>
    </reaction>
</comment>
<comment type="cofactor">
    <cofactor evidence="1">
        <name>a divalent metal cation</name>
        <dbReference type="ChEBI" id="CHEBI:60240"/>
    </cofactor>
    <text evidence="1">Divalent metal cation.</text>
</comment>
<comment type="subunit">
    <text evidence="1">Homotrimer.</text>
</comment>
<comment type="similarity">
    <text evidence="2">Belongs to the class II aldolase/RraA-like family.</text>
</comment>